<evidence type="ECO:0000255" key="1">
    <source>
        <dbReference type="HAMAP-Rule" id="MF_01588"/>
    </source>
</evidence>
<protein>
    <recommendedName>
        <fullName evidence="1">DNA ligase</fullName>
        <ecNumber evidence="1">6.5.1.2</ecNumber>
    </recommendedName>
    <alternativeName>
        <fullName evidence="1">Polydeoxyribonucleotide synthase [NAD(+)]</fullName>
    </alternativeName>
</protein>
<gene>
    <name evidence="1" type="primary">ligA</name>
    <name type="ordered locus">BCAN_A1453</name>
</gene>
<reference key="1">
    <citation type="submission" date="2007-10" db="EMBL/GenBank/DDBJ databases">
        <title>Brucella canis ATCC 23365 whole genome shotgun sequencing project.</title>
        <authorList>
            <person name="Setubal J.C."/>
            <person name="Bowns C."/>
            <person name="Boyle S."/>
            <person name="Crasta O.R."/>
            <person name="Czar M.J."/>
            <person name="Dharmanolla C."/>
            <person name="Gillespie J.J."/>
            <person name="Kenyon R.W."/>
            <person name="Lu J."/>
            <person name="Mane S."/>
            <person name="Mohapatra S."/>
            <person name="Nagrani S."/>
            <person name="Purkayastha A."/>
            <person name="Rajasimha H.K."/>
            <person name="Shallom J.M."/>
            <person name="Shallom S."/>
            <person name="Shukla M."/>
            <person name="Snyder E.E."/>
            <person name="Sobral B.W."/>
            <person name="Wattam A.R."/>
            <person name="Will R."/>
            <person name="Williams K."/>
            <person name="Yoo H."/>
            <person name="Bruce D."/>
            <person name="Detter C."/>
            <person name="Munk C."/>
            <person name="Brettin T.S."/>
        </authorList>
    </citation>
    <scope>NUCLEOTIDE SEQUENCE [LARGE SCALE GENOMIC DNA]</scope>
    <source>
        <strain>ATCC 23365 / NCTC 10854 / RM-666</strain>
    </source>
</reference>
<comment type="function">
    <text evidence="1">DNA ligase that catalyzes the formation of phosphodiester linkages between 5'-phosphoryl and 3'-hydroxyl groups in double-stranded DNA using NAD as a coenzyme and as the energy source for the reaction. It is essential for DNA replication and repair of damaged DNA.</text>
</comment>
<comment type="catalytic activity">
    <reaction evidence="1">
        <text>NAD(+) + (deoxyribonucleotide)n-3'-hydroxyl + 5'-phospho-(deoxyribonucleotide)m = (deoxyribonucleotide)n+m + AMP + beta-nicotinamide D-nucleotide.</text>
        <dbReference type="EC" id="6.5.1.2"/>
    </reaction>
</comment>
<comment type="cofactor">
    <cofactor evidence="1">
        <name>Mg(2+)</name>
        <dbReference type="ChEBI" id="CHEBI:18420"/>
    </cofactor>
    <cofactor evidence="1">
        <name>Mn(2+)</name>
        <dbReference type="ChEBI" id="CHEBI:29035"/>
    </cofactor>
</comment>
<comment type="similarity">
    <text evidence="1">Belongs to the NAD-dependent DNA ligase family. LigA subfamily.</text>
</comment>
<dbReference type="EC" id="6.5.1.2" evidence="1"/>
<dbReference type="EMBL" id="CP000872">
    <property type="protein sequence ID" value="ABX62484.1"/>
    <property type="molecule type" value="Genomic_DNA"/>
</dbReference>
<dbReference type="RefSeq" id="WP_002964528.1">
    <property type="nucleotide sequence ID" value="NC_010103.1"/>
</dbReference>
<dbReference type="SMR" id="A9M679"/>
<dbReference type="GeneID" id="93016281"/>
<dbReference type="KEGG" id="bcs:BCAN_A1453"/>
<dbReference type="HOGENOM" id="CLU_007764_2_0_5"/>
<dbReference type="PhylomeDB" id="A9M679"/>
<dbReference type="Proteomes" id="UP000001385">
    <property type="component" value="Chromosome I"/>
</dbReference>
<dbReference type="GO" id="GO:0005829">
    <property type="term" value="C:cytosol"/>
    <property type="evidence" value="ECO:0007669"/>
    <property type="project" value="TreeGrafter"/>
</dbReference>
<dbReference type="GO" id="GO:0003911">
    <property type="term" value="F:DNA ligase (NAD+) activity"/>
    <property type="evidence" value="ECO:0007669"/>
    <property type="project" value="UniProtKB-UniRule"/>
</dbReference>
<dbReference type="GO" id="GO:0046872">
    <property type="term" value="F:metal ion binding"/>
    <property type="evidence" value="ECO:0007669"/>
    <property type="project" value="UniProtKB-KW"/>
</dbReference>
<dbReference type="GO" id="GO:0006281">
    <property type="term" value="P:DNA repair"/>
    <property type="evidence" value="ECO:0007669"/>
    <property type="project" value="UniProtKB-KW"/>
</dbReference>
<dbReference type="GO" id="GO:0006260">
    <property type="term" value="P:DNA replication"/>
    <property type="evidence" value="ECO:0007669"/>
    <property type="project" value="UniProtKB-KW"/>
</dbReference>
<dbReference type="CDD" id="cd17748">
    <property type="entry name" value="BRCT_DNA_ligase_like"/>
    <property type="match status" value="1"/>
</dbReference>
<dbReference type="CDD" id="cd00114">
    <property type="entry name" value="LIGANc"/>
    <property type="match status" value="1"/>
</dbReference>
<dbReference type="FunFam" id="3.30.470.30:FF:000001">
    <property type="entry name" value="DNA ligase"/>
    <property type="match status" value="1"/>
</dbReference>
<dbReference type="Gene3D" id="6.20.10.30">
    <property type="match status" value="1"/>
</dbReference>
<dbReference type="Gene3D" id="1.10.150.20">
    <property type="entry name" value="5' to 3' exonuclease, C-terminal subdomain"/>
    <property type="match status" value="2"/>
</dbReference>
<dbReference type="Gene3D" id="3.40.50.10190">
    <property type="entry name" value="BRCT domain"/>
    <property type="match status" value="1"/>
</dbReference>
<dbReference type="Gene3D" id="3.30.470.30">
    <property type="entry name" value="DNA ligase/mRNA capping enzyme"/>
    <property type="match status" value="1"/>
</dbReference>
<dbReference type="Gene3D" id="1.10.287.610">
    <property type="entry name" value="Helix hairpin bin"/>
    <property type="match status" value="1"/>
</dbReference>
<dbReference type="Gene3D" id="2.40.50.140">
    <property type="entry name" value="Nucleic acid-binding proteins"/>
    <property type="match status" value="1"/>
</dbReference>
<dbReference type="HAMAP" id="MF_01588">
    <property type="entry name" value="DNA_ligase_A"/>
    <property type="match status" value="1"/>
</dbReference>
<dbReference type="InterPro" id="IPR001357">
    <property type="entry name" value="BRCT_dom"/>
</dbReference>
<dbReference type="InterPro" id="IPR036420">
    <property type="entry name" value="BRCT_dom_sf"/>
</dbReference>
<dbReference type="InterPro" id="IPR041663">
    <property type="entry name" value="DisA/LigA_HHH"/>
</dbReference>
<dbReference type="InterPro" id="IPR001679">
    <property type="entry name" value="DNA_ligase"/>
</dbReference>
<dbReference type="InterPro" id="IPR018239">
    <property type="entry name" value="DNA_ligase_AS"/>
</dbReference>
<dbReference type="InterPro" id="IPR033136">
    <property type="entry name" value="DNA_ligase_CS"/>
</dbReference>
<dbReference type="InterPro" id="IPR013839">
    <property type="entry name" value="DNAligase_adenylation"/>
</dbReference>
<dbReference type="InterPro" id="IPR013840">
    <property type="entry name" value="DNAligase_N"/>
</dbReference>
<dbReference type="InterPro" id="IPR012340">
    <property type="entry name" value="NA-bd_OB-fold"/>
</dbReference>
<dbReference type="InterPro" id="IPR004150">
    <property type="entry name" value="NAD_DNA_ligase_OB"/>
</dbReference>
<dbReference type="InterPro" id="IPR010994">
    <property type="entry name" value="RuvA_2-like"/>
</dbReference>
<dbReference type="InterPro" id="IPR004149">
    <property type="entry name" value="Znf_DNAligase_C4"/>
</dbReference>
<dbReference type="NCBIfam" id="TIGR00575">
    <property type="entry name" value="dnlj"/>
    <property type="match status" value="1"/>
</dbReference>
<dbReference type="NCBIfam" id="NF005932">
    <property type="entry name" value="PRK07956.1"/>
    <property type="match status" value="1"/>
</dbReference>
<dbReference type="PANTHER" id="PTHR23389">
    <property type="entry name" value="CHROMOSOME TRANSMISSION FIDELITY FACTOR 18"/>
    <property type="match status" value="1"/>
</dbReference>
<dbReference type="PANTHER" id="PTHR23389:SF9">
    <property type="entry name" value="DNA LIGASE"/>
    <property type="match status" value="1"/>
</dbReference>
<dbReference type="Pfam" id="PF00533">
    <property type="entry name" value="BRCT"/>
    <property type="match status" value="1"/>
</dbReference>
<dbReference type="Pfam" id="PF01653">
    <property type="entry name" value="DNA_ligase_aden"/>
    <property type="match status" value="1"/>
</dbReference>
<dbReference type="Pfam" id="PF03120">
    <property type="entry name" value="DNA_ligase_OB"/>
    <property type="match status" value="1"/>
</dbReference>
<dbReference type="Pfam" id="PF03119">
    <property type="entry name" value="DNA_ligase_ZBD"/>
    <property type="match status" value="1"/>
</dbReference>
<dbReference type="Pfam" id="PF12826">
    <property type="entry name" value="HHH_2"/>
    <property type="match status" value="1"/>
</dbReference>
<dbReference type="PIRSF" id="PIRSF001604">
    <property type="entry name" value="LigA"/>
    <property type="match status" value="1"/>
</dbReference>
<dbReference type="SMART" id="SM00292">
    <property type="entry name" value="BRCT"/>
    <property type="match status" value="1"/>
</dbReference>
<dbReference type="SMART" id="SM00532">
    <property type="entry name" value="LIGANc"/>
    <property type="match status" value="1"/>
</dbReference>
<dbReference type="SUPFAM" id="SSF52113">
    <property type="entry name" value="BRCT domain"/>
    <property type="match status" value="1"/>
</dbReference>
<dbReference type="SUPFAM" id="SSF56091">
    <property type="entry name" value="DNA ligase/mRNA capping enzyme, catalytic domain"/>
    <property type="match status" value="1"/>
</dbReference>
<dbReference type="SUPFAM" id="SSF50249">
    <property type="entry name" value="Nucleic acid-binding proteins"/>
    <property type="match status" value="1"/>
</dbReference>
<dbReference type="SUPFAM" id="SSF47781">
    <property type="entry name" value="RuvA domain 2-like"/>
    <property type="match status" value="1"/>
</dbReference>
<dbReference type="PROSITE" id="PS50172">
    <property type="entry name" value="BRCT"/>
    <property type="match status" value="1"/>
</dbReference>
<dbReference type="PROSITE" id="PS01055">
    <property type="entry name" value="DNA_LIGASE_N1"/>
    <property type="match status" value="1"/>
</dbReference>
<dbReference type="PROSITE" id="PS01056">
    <property type="entry name" value="DNA_LIGASE_N2"/>
    <property type="match status" value="1"/>
</dbReference>
<feature type="chain" id="PRO_0000340330" description="DNA ligase">
    <location>
        <begin position="1"/>
        <end position="719"/>
    </location>
</feature>
<feature type="domain" description="BRCT" evidence="1">
    <location>
        <begin position="640"/>
        <end position="719"/>
    </location>
</feature>
<feature type="active site" description="N6-AMP-lysine intermediate" evidence="1">
    <location>
        <position position="128"/>
    </location>
</feature>
<feature type="binding site" evidence="1">
    <location>
        <begin position="42"/>
        <end position="46"/>
    </location>
    <ligand>
        <name>NAD(+)</name>
        <dbReference type="ChEBI" id="CHEBI:57540"/>
    </ligand>
</feature>
<feature type="binding site" evidence="1">
    <location>
        <begin position="92"/>
        <end position="93"/>
    </location>
    <ligand>
        <name>NAD(+)</name>
        <dbReference type="ChEBI" id="CHEBI:57540"/>
    </ligand>
</feature>
<feature type="binding site" evidence="1">
    <location>
        <position position="126"/>
    </location>
    <ligand>
        <name>NAD(+)</name>
        <dbReference type="ChEBI" id="CHEBI:57540"/>
    </ligand>
</feature>
<feature type="binding site" evidence="1">
    <location>
        <position position="149"/>
    </location>
    <ligand>
        <name>NAD(+)</name>
        <dbReference type="ChEBI" id="CHEBI:57540"/>
    </ligand>
</feature>
<feature type="binding site" evidence="1">
    <location>
        <position position="185"/>
    </location>
    <ligand>
        <name>NAD(+)</name>
        <dbReference type="ChEBI" id="CHEBI:57540"/>
    </ligand>
</feature>
<feature type="binding site" evidence="1">
    <location>
        <position position="301"/>
    </location>
    <ligand>
        <name>NAD(+)</name>
        <dbReference type="ChEBI" id="CHEBI:57540"/>
    </ligand>
</feature>
<feature type="binding site" evidence="1">
    <location>
        <position position="325"/>
    </location>
    <ligand>
        <name>NAD(+)</name>
        <dbReference type="ChEBI" id="CHEBI:57540"/>
    </ligand>
</feature>
<feature type="binding site" evidence="1">
    <location>
        <position position="430"/>
    </location>
    <ligand>
        <name>Zn(2+)</name>
        <dbReference type="ChEBI" id="CHEBI:29105"/>
    </ligand>
</feature>
<feature type="binding site" evidence="1">
    <location>
        <position position="433"/>
    </location>
    <ligand>
        <name>Zn(2+)</name>
        <dbReference type="ChEBI" id="CHEBI:29105"/>
    </ligand>
</feature>
<feature type="binding site" evidence="1">
    <location>
        <position position="448"/>
    </location>
    <ligand>
        <name>Zn(2+)</name>
        <dbReference type="ChEBI" id="CHEBI:29105"/>
    </ligand>
</feature>
<feature type="binding site" evidence="1">
    <location>
        <position position="454"/>
    </location>
    <ligand>
        <name>Zn(2+)</name>
        <dbReference type="ChEBI" id="CHEBI:29105"/>
    </ligand>
</feature>
<accession>A9M679</accession>
<sequence length="719" mass="78681">MSDISVEKLTELEAAAELERLARAIAHHDELYHAKDRPEISDAAYDALKRRNEAIEAHFPALVRDDSPSRRVGAAPALATFAPVVHARPMLSLDNAFSDEDVRDFVGSVYRFLGQLPDDSIAFTAEPKIDGLSMSIRYENGILVSGATRGDGTTGENVTANIRTIAEIPNRLPAGAPAVVEVRGEVYMAKSDFLTLNAQMEAEGKQTYVNPRNTAAGSLRQLDAKVTASRKLRFFAYAWGEMSDMPADTQLGMVEVFRQWGFPVNPLMKRFNSVDGLLAHYRAIGMERPTLDYDIDGVVYKVDRLDLQTRLGFRSRSPRWAIAHKFPAEQALTILRGIDIQVGRTGALTPVARLEPITVGGVVVTNATLHNEDYIKGIGQKGEPIREGRDIRIGDSVIVQRAGDVIPQIVDVVLEEGKKRGEPYQFPHVCPACGSHAVREEGEAVRRCTGGLICPAQAVERIRHFVSRNAFDIEGLGEKQVEFFFNAEDPALCIRSPADIFTLKKRQENSLTKLQNIEGFGATSVKKLYDAIDARREIALHRFLFGLGIRHVGEVNAKRLARAYLSYAAFEKAALEAVPPKEGDRTDKGSEAWQDMLAVEGIGSIVAEAVVDFYGEPHNREVLAALLAEVTPLDEEARVATGSPVEGKTVVFTGSLERMSRDEAKAMAERHGAKTAGSVSKKTDLVVAGPGAGSKLAKATELGIEVINEDDWFKLVGED</sequence>
<name>DNLJ_BRUC2</name>
<keyword id="KW-0227">DNA damage</keyword>
<keyword id="KW-0234">DNA repair</keyword>
<keyword id="KW-0235">DNA replication</keyword>
<keyword id="KW-0436">Ligase</keyword>
<keyword id="KW-0460">Magnesium</keyword>
<keyword id="KW-0464">Manganese</keyword>
<keyword id="KW-0479">Metal-binding</keyword>
<keyword id="KW-0520">NAD</keyword>
<keyword id="KW-1185">Reference proteome</keyword>
<keyword id="KW-0862">Zinc</keyword>
<proteinExistence type="inferred from homology"/>
<organism>
    <name type="scientific">Brucella canis (strain ATCC 23365 / NCTC 10854 / RM-666)</name>
    <dbReference type="NCBI Taxonomy" id="483179"/>
    <lineage>
        <taxon>Bacteria</taxon>
        <taxon>Pseudomonadati</taxon>
        <taxon>Pseudomonadota</taxon>
        <taxon>Alphaproteobacteria</taxon>
        <taxon>Hyphomicrobiales</taxon>
        <taxon>Brucellaceae</taxon>
        <taxon>Brucella/Ochrobactrum group</taxon>
        <taxon>Brucella</taxon>
    </lineage>
</organism>